<accession>B3PID5</accession>
<keyword id="KW-0004">4Fe-4S</keyword>
<keyword id="KW-0067">ATP-binding</keyword>
<keyword id="KW-0963">Cytoplasm</keyword>
<keyword id="KW-0408">Iron</keyword>
<keyword id="KW-0411">Iron-sulfur</keyword>
<keyword id="KW-0460">Magnesium</keyword>
<keyword id="KW-0479">Metal-binding</keyword>
<keyword id="KW-0547">Nucleotide-binding</keyword>
<keyword id="KW-1185">Reference proteome</keyword>
<keyword id="KW-0694">RNA-binding</keyword>
<keyword id="KW-0808">Transferase</keyword>
<keyword id="KW-0819">tRNA processing</keyword>
<keyword id="KW-0820">tRNA-binding</keyword>
<organism>
    <name type="scientific">Cellvibrio japonicus (strain Ueda107)</name>
    <name type="common">Pseudomonas fluorescens subsp. cellulosa</name>
    <dbReference type="NCBI Taxonomy" id="498211"/>
    <lineage>
        <taxon>Bacteria</taxon>
        <taxon>Pseudomonadati</taxon>
        <taxon>Pseudomonadota</taxon>
        <taxon>Gammaproteobacteria</taxon>
        <taxon>Cellvibrionales</taxon>
        <taxon>Cellvibrionaceae</taxon>
        <taxon>Cellvibrio</taxon>
    </lineage>
</organism>
<protein>
    <recommendedName>
        <fullName evidence="1">tRNA-cytidine(32) 2-sulfurtransferase</fullName>
        <ecNumber evidence="1">2.8.1.-</ecNumber>
    </recommendedName>
    <alternativeName>
        <fullName evidence="1">Two-thiocytidine biosynthesis protein A</fullName>
    </alternativeName>
    <alternativeName>
        <fullName evidence="1">tRNA 2-thiocytidine biosynthesis protein TtcA</fullName>
    </alternativeName>
</protein>
<evidence type="ECO:0000255" key="1">
    <source>
        <dbReference type="HAMAP-Rule" id="MF_01850"/>
    </source>
</evidence>
<gene>
    <name evidence="1" type="primary">ttcA</name>
    <name type="ordered locus">CJA_2075</name>
</gene>
<sequence length="302" mass="34166">MTSLNQRKDRLEFNKLQKRLRRQTGSAIVDYNMIEDGDKVMVCLSGGKDSYTMLDILLSLQQTAPIRFELVAVNMDQKQPGFPEHVLPNYLAQLGVPFHIIERDTYSIVKEVVPEGKTTCGLCSRLRRGTLYGFADEIGATKIALGHHRDDIIETLFLNMFYGGKLKAMPPKLLSDDKRNIVIRPLAYCAEEDIAEFARLKGFPIIPCNLCGSQENLQRQAVKEMLHAWERQFPGRTETIFTAIRNVQPSQLGDLELFDFVNLAIDKTATAVEDASDACAVPNWHRPAQEEVVQYVDVLDIH</sequence>
<proteinExistence type="inferred from homology"/>
<feature type="chain" id="PRO_1000188629" description="tRNA-cytidine(32) 2-sulfurtransferase">
    <location>
        <begin position="1"/>
        <end position="302"/>
    </location>
</feature>
<feature type="short sequence motif" description="PP-loop motif" evidence="1">
    <location>
        <begin position="45"/>
        <end position="50"/>
    </location>
</feature>
<feature type="binding site" evidence="1">
    <location>
        <position position="120"/>
    </location>
    <ligand>
        <name>[4Fe-4S] cluster</name>
        <dbReference type="ChEBI" id="CHEBI:49883"/>
    </ligand>
</feature>
<feature type="binding site" evidence="1">
    <location>
        <position position="123"/>
    </location>
    <ligand>
        <name>[4Fe-4S] cluster</name>
        <dbReference type="ChEBI" id="CHEBI:49883"/>
    </ligand>
</feature>
<feature type="binding site" evidence="1">
    <location>
        <position position="211"/>
    </location>
    <ligand>
        <name>[4Fe-4S] cluster</name>
        <dbReference type="ChEBI" id="CHEBI:49883"/>
    </ligand>
</feature>
<dbReference type="EC" id="2.8.1.-" evidence="1"/>
<dbReference type="EMBL" id="CP000934">
    <property type="protein sequence ID" value="ACE83039.1"/>
    <property type="molecule type" value="Genomic_DNA"/>
</dbReference>
<dbReference type="RefSeq" id="WP_012487682.1">
    <property type="nucleotide sequence ID" value="NC_010995.1"/>
</dbReference>
<dbReference type="SMR" id="B3PID5"/>
<dbReference type="STRING" id="498211.CJA_2075"/>
<dbReference type="KEGG" id="cja:CJA_2075"/>
<dbReference type="eggNOG" id="COG0037">
    <property type="taxonomic scope" value="Bacteria"/>
</dbReference>
<dbReference type="HOGENOM" id="CLU_026481_0_0_6"/>
<dbReference type="OrthoDB" id="9801054at2"/>
<dbReference type="Proteomes" id="UP000001036">
    <property type="component" value="Chromosome"/>
</dbReference>
<dbReference type="GO" id="GO:0005737">
    <property type="term" value="C:cytoplasm"/>
    <property type="evidence" value="ECO:0007669"/>
    <property type="project" value="UniProtKB-SubCell"/>
</dbReference>
<dbReference type="GO" id="GO:0051539">
    <property type="term" value="F:4 iron, 4 sulfur cluster binding"/>
    <property type="evidence" value="ECO:0007669"/>
    <property type="project" value="UniProtKB-UniRule"/>
</dbReference>
<dbReference type="GO" id="GO:0005524">
    <property type="term" value="F:ATP binding"/>
    <property type="evidence" value="ECO:0007669"/>
    <property type="project" value="UniProtKB-UniRule"/>
</dbReference>
<dbReference type="GO" id="GO:0000287">
    <property type="term" value="F:magnesium ion binding"/>
    <property type="evidence" value="ECO:0007669"/>
    <property type="project" value="UniProtKB-UniRule"/>
</dbReference>
<dbReference type="GO" id="GO:0016783">
    <property type="term" value="F:sulfurtransferase activity"/>
    <property type="evidence" value="ECO:0007669"/>
    <property type="project" value="UniProtKB-UniRule"/>
</dbReference>
<dbReference type="GO" id="GO:0000049">
    <property type="term" value="F:tRNA binding"/>
    <property type="evidence" value="ECO:0007669"/>
    <property type="project" value="UniProtKB-KW"/>
</dbReference>
<dbReference type="GO" id="GO:0034227">
    <property type="term" value="P:tRNA thio-modification"/>
    <property type="evidence" value="ECO:0007669"/>
    <property type="project" value="UniProtKB-UniRule"/>
</dbReference>
<dbReference type="CDD" id="cd24138">
    <property type="entry name" value="TtcA-like"/>
    <property type="match status" value="1"/>
</dbReference>
<dbReference type="Gene3D" id="3.40.50.620">
    <property type="entry name" value="HUPs"/>
    <property type="match status" value="1"/>
</dbReference>
<dbReference type="HAMAP" id="MF_01850">
    <property type="entry name" value="TtcA"/>
    <property type="match status" value="1"/>
</dbReference>
<dbReference type="InterPro" id="IPR014729">
    <property type="entry name" value="Rossmann-like_a/b/a_fold"/>
</dbReference>
<dbReference type="InterPro" id="IPR011063">
    <property type="entry name" value="TilS/TtcA_N"/>
</dbReference>
<dbReference type="InterPro" id="IPR012089">
    <property type="entry name" value="tRNA_Cyd_32_2_STrfase"/>
</dbReference>
<dbReference type="InterPro" id="IPR035107">
    <property type="entry name" value="tRNA_thiolation_TtcA_Ctu1"/>
</dbReference>
<dbReference type="NCBIfam" id="NF007972">
    <property type="entry name" value="PRK10696.1"/>
    <property type="match status" value="1"/>
</dbReference>
<dbReference type="PANTHER" id="PTHR43686:SF1">
    <property type="entry name" value="AMINOTRAN_5 DOMAIN-CONTAINING PROTEIN"/>
    <property type="match status" value="1"/>
</dbReference>
<dbReference type="PANTHER" id="PTHR43686">
    <property type="entry name" value="SULFURTRANSFERASE-RELATED"/>
    <property type="match status" value="1"/>
</dbReference>
<dbReference type="Pfam" id="PF01171">
    <property type="entry name" value="ATP_bind_3"/>
    <property type="match status" value="1"/>
</dbReference>
<dbReference type="PIRSF" id="PIRSF004976">
    <property type="entry name" value="ATPase_YdaO"/>
    <property type="match status" value="1"/>
</dbReference>
<dbReference type="SUPFAM" id="SSF52402">
    <property type="entry name" value="Adenine nucleotide alpha hydrolases-like"/>
    <property type="match status" value="1"/>
</dbReference>
<comment type="function">
    <text evidence="1">Catalyzes the ATP-dependent 2-thiolation of cytidine in position 32 of tRNA, to form 2-thiocytidine (s(2)C32). The sulfur atoms are provided by the cysteine/cysteine desulfurase (IscS) system.</text>
</comment>
<comment type="catalytic activity">
    <reaction evidence="1">
        <text>cytidine(32) in tRNA + S-sulfanyl-L-cysteinyl-[cysteine desulfurase] + AH2 + ATP = 2-thiocytidine(32) in tRNA + L-cysteinyl-[cysteine desulfurase] + A + AMP + diphosphate + H(+)</text>
        <dbReference type="Rhea" id="RHEA:57048"/>
        <dbReference type="Rhea" id="RHEA-COMP:10288"/>
        <dbReference type="Rhea" id="RHEA-COMP:12157"/>
        <dbReference type="Rhea" id="RHEA-COMP:12158"/>
        <dbReference type="Rhea" id="RHEA-COMP:14821"/>
        <dbReference type="ChEBI" id="CHEBI:13193"/>
        <dbReference type="ChEBI" id="CHEBI:15378"/>
        <dbReference type="ChEBI" id="CHEBI:17499"/>
        <dbReference type="ChEBI" id="CHEBI:29950"/>
        <dbReference type="ChEBI" id="CHEBI:30616"/>
        <dbReference type="ChEBI" id="CHEBI:33019"/>
        <dbReference type="ChEBI" id="CHEBI:61963"/>
        <dbReference type="ChEBI" id="CHEBI:82748"/>
        <dbReference type="ChEBI" id="CHEBI:141453"/>
        <dbReference type="ChEBI" id="CHEBI:456215"/>
    </reaction>
    <physiologicalReaction direction="left-to-right" evidence="1">
        <dbReference type="Rhea" id="RHEA:57049"/>
    </physiologicalReaction>
</comment>
<comment type="cofactor">
    <cofactor evidence="1">
        <name>Mg(2+)</name>
        <dbReference type="ChEBI" id="CHEBI:18420"/>
    </cofactor>
</comment>
<comment type="cofactor">
    <cofactor evidence="1">
        <name>[4Fe-4S] cluster</name>
        <dbReference type="ChEBI" id="CHEBI:49883"/>
    </cofactor>
    <text evidence="1">Binds 1 [4Fe-4S] cluster per subunit. The cluster is chelated by three Cys residues, the fourth Fe has a free coordination site that may bind a sulfur atom transferred from the persulfide of IscS.</text>
</comment>
<comment type="pathway">
    <text evidence="1">tRNA modification.</text>
</comment>
<comment type="subunit">
    <text evidence="1">Homodimer.</text>
</comment>
<comment type="subcellular location">
    <subcellularLocation>
        <location evidence="1">Cytoplasm</location>
    </subcellularLocation>
</comment>
<comment type="miscellaneous">
    <text evidence="1">The thiolation reaction likely consists of two steps: a first activation step by ATP to form an adenylated intermediate of the target base of tRNA, and a second nucleophilic substitution step of the sulfur (S) atom supplied by the hydrosulfide attached to the Fe-S cluster.</text>
</comment>
<comment type="similarity">
    <text evidence="1">Belongs to the TtcA family.</text>
</comment>
<name>TTCA_CELJU</name>
<reference key="1">
    <citation type="journal article" date="2008" name="J. Bacteriol.">
        <title>Insights into plant cell wall degradation from the genome sequence of the soil bacterium Cellvibrio japonicus.</title>
        <authorList>
            <person name="DeBoy R.T."/>
            <person name="Mongodin E.F."/>
            <person name="Fouts D.E."/>
            <person name="Tailford L.E."/>
            <person name="Khouri H."/>
            <person name="Emerson J.B."/>
            <person name="Mohamoud Y."/>
            <person name="Watkins K."/>
            <person name="Henrissat B."/>
            <person name="Gilbert H.J."/>
            <person name="Nelson K.E."/>
        </authorList>
    </citation>
    <scope>NUCLEOTIDE SEQUENCE [LARGE SCALE GENOMIC DNA]</scope>
    <source>
        <strain>Ueda107</strain>
    </source>
</reference>